<protein>
    <recommendedName>
        <fullName evidence="5">Major pollen allergen Bet v 1-J</fullName>
    </recommendedName>
    <alternativeName>
        <fullName evidence="5">Allergen Bet v I-J</fullName>
    </alternativeName>
    <allergenName evidence="5">Bet v 1-J</allergenName>
</protein>
<gene>
    <name evidence="5" type="primary">BETV1J</name>
</gene>
<organism>
    <name type="scientific">Betula pendula</name>
    <name type="common">European white birch</name>
    <name type="synonym">Betula verrucosa</name>
    <dbReference type="NCBI Taxonomy" id="3505"/>
    <lineage>
        <taxon>Eukaryota</taxon>
        <taxon>Viridiplantae</taxon>
        <taxon>Streptophyta</taxon>
        <taxon>Embryophyta</taxon>
        <taxon>Tracheophyta</taxon>
        <taxon>Spermatophyta</taxon>
        <taxon>Magnoliopsida</taxon>
        <taxon>eudicotyledons</taxon>
        <taxon>Gunneridae</taxon>
        <taxon>Pentapetalae</taxon>
        <taxon>rosids</taxon>
        <taxon>fabids</taxon>
        <taxon>Fagales</taxon>
        <taxon>Betulaceae</taxon>
        <taxon>Betula</taxon>
    </lineage>
</organism>
<feature type="initiator methionine" description="Removed" evidence="3">
    <location>
        <position position="1"/>
    </location>
</feature>
<feature type="chain" id="PRO_0000154181" description="Major pollen allergen Bet v 1-J">
    <location>
        <begin position="2"/>
        <end position="160"/>
    </location>
</feature>
<feature type="region of interest" description="Hydrophobic ligand pocket" evidence="4 8">
    <location>
        <begin position="116"/>
        <end position="118"/>
    </location>
</feature>
<feature type="region of interest" description="Hydrophobic ligand pocket" evidence="4 8">
    <location>
        <begin position="133"/>
        <end position="141"/>
    </location>
</feature>
<feature type="binding site" evidence="1">
    <location>
        <position position="55"/>
    </location>
    <ligand>
        <name>brassinolide</name>
        <dbReference type="ChEBI" id="CHEBI:28277"/>
    </ligand>
</feature>
<feature type="binding site" evidence="1">
    <location>
        <position position="82"/>
    </location>
    <ligand>
        <name>brassinolide</name>
        <dbReference type="ChEBI" id="CHEBI:28277"/>
    </ligand>
</feature>
<feature type="binding site" evidence="1">
    <location>
        <position position="84"/>
    </location>
    <ligand>
        <name>brassinolide</name>
        <dbReference type="ChEBI" id="CHEBI:28277"/>
    </ligand>
</feature>
<feature type="binding site" evidence="1">
    <location>
        <position position="101"/>
    </location>
    <ligand>
        <name>brassinolide</name>
        <dbReference type="ChEBI" id="CHEBI:28277"/>
    </ligand>
</feature>
<feature type="strand" evidence="9">
    <location>
        <begin position="3"/>
        <end position="14"/>
    </location>
</feature>
<feature type="helix" evidence="9">
    <location>
        <begin position="16"/>
        <end position="23"/>
    </location>
</feature>
<feature type="turn" evidence="9">
    <location>
        <begin position="24"/>
        <end position="26"/>
    </location>
</feature>
<feature type="helix" evidence="9">
    <location>
        <begin position="27"/>
        <end position="34"/>
    </location>
</feature>
<feature type="turn" evidence="9">
    <location>
        <begin position="36"/>
        <end position="38"/>
    </location>
</feature>
<feature type="strand" evidence="9">
    <location>
        <begin position="41"/>
        <end position="46"/>
    </location>
</feature>
<feature type="strand" evidence="9">
    <location>
        <begin position="48"/>
        <end position="50"/>
    </location>
</feature>
<feature type="strand" evidence="9">
    <location>
        <begin position="54"/>
        <end position="58"/>
    </location>
</feature>
<feature type="strand" evidence="9">
    <location>
        <begin position="66"/>
        <end position="76"/>
    </location>
</feature>
<feature type="turn" evidence="9">
    <location>
        <begin position="77"/>
        <end position="80"/>
    </location>
</feature>
<feature type="strand" evidence="9">
    <location>
        <begin position="81"/>
        <end position="89"/>
    </location>
</feature>
<feature type="strand" evidence="9">
    <location>
        <begin position="96"/>
        <end position="107"/>
    </location>
</feature>
<feature type="strand" evidence="9">
    <location>
        <begin position="113"/>
        <end position="126"/>
    </location>
</feature>
<feature type="helix" evidence="9">
    <location>
        <begin position="132"/>
        <end position="154"/>
    </location>
</feature>
<feature type="turn" evidence="9">
    <location>
        <begin position="156"/>
        <end position="159"/>
    </location>
</feature>
<keyword id="KW-0002">3D-structure</keyword>
<keyword id="KW-0020">Allergen</keyword>
<keyword id="KW-0963">Cytoplasm</keyword>
<keyword id="KW-0903">Direct protein sequencing</keyword>
<keyword id="KW-0568">Pathogenesis-related protein</keyword>
<keyword id="KW-0611">Plant defense</keyword>
<reference key="1">
    <citation type="journal article" date="1995" name="J. Biol. Chem.">
        <title>Isoforms of Bet v 1, the major birch pollen allergen, analyzed by liquid chromatography, mass spectrometry, and cDNA cloning.</title>
        <authorList>
            <person name="Swoboda I."/>
            <person name="Jilek A."/>
            <person name="Ferreira F."/>
            <person name="Engel E."/>
            <person name="Hoffman-Sommergruber K."/>
            <person name="Scheiner O."/>
            <person name="Kraft D."/>
            <person name="Breiteneder H."/>
            <person name="Pittenauer E."/>
            <person name="Schmid E."/>
            <person name="Vicente O."/>
            <person name="Heberle-Bors E."/>
            <person name="Ahorn H."/>
            <person name="Breitenbach M."/>
        </authorList>
    </citation>
    <scope>NUCLEOTIDE SEQUENCE [MRNA]</scope>
    <scope>PARTIAL PROTEIN SEQUENCE</scope>
    <source>
        <tissue>Pollen</tissue>
    </source>
</reference>
<reference key="2">
    <citation type="journal article" date="2012" name="J. Mol. Biol.">
        <title>Crystallographically mapped ligand binding differs in high and low IgE binding isoforms of birch pollen allergen bet v 1.</title>
        <authorList>
            <person name="Kofler S."/>
            <person name="Asam C."/>
            <person name="Eckhard U."/>
            <person name="Wallner M."/>
            <person name="Ferreira F."/>
            <person name="Brandstetter H."/>
        </authorList>
    </citation>
    <scope>X-RAY CRYSTALLOGRAPHY (1.16 ANGSTROMS) OF 2-160 IN COMPLEX WITH 1-ANILINO-8-NAPHTHALENE SULFONATE</scope>
</reference>
<accession>P43183</accession>
<dbReference type="EMBL" id="X77271">
    <property type="protein sequence ID" value="CAA54487.1"/>
    <property type="molecule type" value="mRNA"/>
</dbReference>
<dbReference type="PIR" id="G55699">
    <property type="entry name" value="G55699"/>
</dbReference>
<dbReference type="PDB" id="4A8U">
    <property type="method" value="X-ray"/>
    <property type="resolution" value="1.16 A"/>
    <property type="chains" value="A=2-160"/>
</dbReference>
<dbReference type="PDB" id="4A8V">
    <property type="method" value="X-ray"/>
    <property type="resolution" value="1.23 A"/>
    <property type="chains" value="A=2-160"/>
</dbReference>
<dbReference type="PDBsum" id="4A8U"/>
<dbReference type="PDBsum" id="4A8V"/>
<dbReference type="SMR" id="P43183"/>
<dbReference type="Allergome" id="101">
    <property type="allergen name" value="Bet v 1.0106"/>
</dbReference>
<dbReference type="Allergome" id="89">
    <property type="allergen name" value="Bet v 1"/>
</dbReference>
<dbReference type="EvolutionaryTrace" id="P43183"/>
<dbReference type="GO" id="GO:0005737">
    <property type="term" value="C:cytoplasm"/>
    <property type="evidence" value="ECO:0007669"/>
    <property type="project" value="UniProtKB-SubCell"/>
</dbReference>
<dbReference type="GO" id="GO:0005634">
    <property type="term" value="C:nucleus"/>
    <property type="evidence" value="ECO:0007669"/>
    <property type="project" value="TreeGrafter"/>
</dbReference>
<dbReference type="GO" id="GO:0010427">
    <property type="term" value="F:abscisic acid binding"/>
    <property type="evidence" value="ECO:0007669"/>
    <property type="project" value="InterPro"/>
</dbReference>
<dbReference type="GO" id="GO:0004864">
    <property type="term" value="F:protein phosphatase inhibitor activity"/>
    <property type="evidence" value="ECO:0007669"/>
    <property type="project" value="InterPro"/>
</dbReference>
<dbReference type="GO" id="GO:0038023">
    <property type="term" value="F:signaling receptor activity"/>
    <property type="evidence" value="ECO:0007669"/>
    <property type="project" value="InterPro"/>
</dbReference>
<dbReference type="GO" id="GO:0009738">
    <property type="term" value="P:abscisic acid-activated signaling pathway"/>
    <property type="evidence" value="ECO:0007669"/>
    <property type="project" value="InterPro"/>
</dbReference>
<dbReference type="GO" id="GO:0006952">
    <property type="term" value="P:defense response"/>
    <property type="evidence" value="ECO:0007669"/>
    <property type="project" value="UniProtKB-KW"/>
</dbReference>
<dbReference type="CDD" id="cd07816">
    <property type="entry name" value="Bet_v1-like"/>
    <property type="match status" value="1"/>
</dbReference>
<dbReference type="FunFam" id="3.30.530.20:FF:000007">
    <property type="entry name" value="Major pollen allergen Bet v 1-A"/>
    <property type="match status" value="1"/>
</dbReference>
<dbReference type="Gene3D" id="3.30.530.20">
    <property type="match status" value="1"/>
</dbReference>
<dbReference type="InterPro" id="IPR000916">
    <property type="entry name" value="Bet_v_I/MLP"/>
</dbReference>
<dbReference type="InterPro" id="IPR024949">
    <property type="entry name" value="Bet_v_I_allergen"/>
</dbReference>
<dbReference type="InterPro" id="IPR050279">
    <property type="entry name" value="Plant_def-hormone_signal"/>
</dbReference>
<dbReference type="InterPro" id="IPR023393">
    <property type="entry name" value="START-like_dom_sf"/>
</dbReference>
<dbReference type="PANTHER" id="PTHR31213">
    <property type="entry name" value="OS08G0374000 PROTEIN-RELATED"/>
    <property type="match status" value="1"/>
</dbReference>
<dbReference type="PANTHER" id="PTHR31213:SF55">
    <property type="entry name" value="STRESS-INDUCED PROTEIN SAM22"/>
    <property type="match status" value="1"/>
</dbReference>
<dbReference type="Pfam" id="PF00407">
    <property type="entry name" value="Bet_v_1"/>
    <property type="match status" value="1"/>
</dbReference>
<dbReference type="PRINTS" id="PR00634">
    <property type="entry name" value="BETALLERGEN"/>
</dbReference>
<dbReference type="SMART" id="SM01037">
    <property type="entry name" value="Bet_v_1"/>
    <property type="match status" value="1"/>
</dbReference>
<dbReference type="SUPFAM" id="SSF55961">
    <property type="entry name" value="Bet v1-like"/>
    <property type="match status" value="1"/>
</dbReference>
<dbReference type="PROSITE" id="PS00451">
    <property type="entry name" value="PATHOGENESIS_BETVI"/>
    <property type="match status" value="1"/>
</dbReference>
<name>BEV1J_BETPN</name>
<evidence type="ECO:0000250" key="1">
    <source>
        <dbReference type="UniProtKB" id="P43185"/>
    </source>
</evidence>
<evidence type="ECO:0000250" key="2">
    <source>
        <dbReference type="UniProtKB" id="P80889"/>
    </source>
</evidence>
<evidence type="ECO:0000255" key="3"/>
<evidence type="ECO:0000269" key="4">
    <source>
    </source>
</evidence>
<evidence type="ECO:0000303" key="5">
    <source>
    </source>
</evidence>
<evidence type="ECO:0000305" key="6"/>
<evidence type="ECO:0000305" key="7">
    <source>
    </source>
</evidence>
<evidence type="ECO:0007744" key="8">
    <source>
        <dbReference type="PDB" id="4A8V"/>
    </source>
</evidence>
<evidence type="ECO:0007829" key="9">
    <source>
        <dbReference type="PDB" id="4A8U"/>
    </source>
</evidence>
<comment type="function">
    <text evidence="1">May be a general steroid carrier protein.</text>
</comment>
<comment type="subcellular location">
    <subcellularLocation>
        <location evidence="2">Cytoplasm</location>
    </subcellularLocation>
</comment>
<comment type="tissue specificity">
    <text evidence="7">Pollen.</text>
</comment>
<comment type="allergen">
    <text evidence="7">Causes an allergic reaction in human. Is a cause of type I allergic reactions in Europe, North America and USSR.</text>
</comment>
<comment type="similarity">
    <text evidence="6">Belongs to the BetVI family.</text>
</comment>
<proteinExistence type="evidence at protein level"/>
<sequence>MGVFNYETEATSVIPAARLFKAFILDGDNLFPKVAPQAISSVENIEGNGGPGTIKKISFPEGFPFKYVKDRVDEVDHTNFKYSYSVIEGGPVGDTLEKISNEIKIVATPNGGSILKINNKYHTKGDHEVKAEQIKASKEMGETLLRAVESYLLAHSDAYN</sequence>